<evidence type="ECO:0000255" key="1">
    <source>
        <dbReference type="PROSITE-ProRule" id="PRU00252"/>
    </source>
</evidence>
<evidence type="ECO:0000269" key="2">
    <source>
    </source>
</evidence>
<evidence type="ECO:0000269" key="3">
    <source>
    </source>
</evidence>
<evidence type="ECO:0000305" key="4"/>
<evidence type="ECO:0000305" key="5">
    <source>
    </source>
</evidence>
<comment type="function">
    <text evidence="2">Regulates mitochondrial DNA recombination. Represses homologous recombination, preventing mitochondrial genome instability and unbalanced transmission of alternative mtDNA configurations. Binds preferentially single-stranded DNA. Does not bind to RNA.</text>
</comment>
<comment type="subcellular location">
    <subcellularLocation>
        <location evidence="2 5">Mitochondrion</location>
    </subcellularLocation>
</comment>
<comment type="tissue specificity">
    <text evidence="2">Expressed in root elongation zone and in gametophytic cells.</text>
</comment>
<comment type="domain">
    <text>The PDF region is required for protein-DNA interaction while the SSB domain is not required for ssDNA binding.</text>
</comment>
<comment type="disruption phenotype">
    <text evidence="2">Severe leaf variegation, distortion and partial sterility.</text>
</comment>
<comment type="sequence caution" evidence="4">
    <conflict type="erroneous gene model prediction">
        <sequence resource="EMBL-CDS" id="AAF99794"/>
    </conflict>
</comment>
<gene>
    <name type="primary">OSB1</name>
    <name type="ordered locus">At1g47720</name>
    <name type="ORF">F16N3.2</name>
    <name type="ORF">T2E6.21</name>
</gene>
<organism>
    <name type="scientific">Arabidopsis thaliana</name>
    <name type="common">Mouse-ear cress</name>
    <dbReference type="NCBI Taxonomy" id="3702"/>
    <lineage>
        <taxon>Eukaryota</taxon>
        <taxon>Viridiplantae</taxon>
        <taxon>Streptophyta</taxon>
        <taxon>Embryophyta</taxon>
        <taxon>Tracheophyta</taxon>
        <taxon>Spermatophyta</taxon>
        <taxon>Magnoliopsida</taxon>
        <taxon>eudicotyledons</taxon>
        <taxon>Gunneridae</taxon>
        <taxon>Pentapetalae</taxon>
        <taxon>rosids</taxon>
        <taxon>malvids</taxon>
        <taxon>Brassicales</taxon>
        <taxon>Brassicaceae</taxon>
        <taxon>Camelineae</taxon>
        <taxon>Arabidopsis</taxon>
    </lineage>
</organism>
<sequence>MNTFFKLGSLIQRTASQISSSFPKSRFFSDGESAVYHHARLFKKPLSTKLKFNLVNSVSLMGFVDRSIQVMNTGPDRFGVFTILRVKDPLNPNRSFRISLRMWDAMARTCIAHLKLNDHILVSGRLESYSKSSSDVYSGLNLDYQVKVAEVNYVAAPPSHVLDSQISKNPKTKTEDDIEESKKDEIYLWQVFFSNPYDWWDNRRNKKNPKQPDFKHKDTGEALWLCSDLPDWITRRLELFDQKNRFYDEEKTRRDRLSDYI</sequence>
<name>OSB1_ARATH</name>
<feature type="transit peptide" description="Mitochondrion" evidence="3">
    <location>
        <begin position="1"/>
        <end position="28"/>
    </location>
</feature>
<feature type="chain" id="PRO_0000383608" description="Protein OSB1, mitochondrial">
    <location>
        <begin position="29"/>
        <end position="261"/>
    </location>
</feature>
<feature type="domain" description="SSB" evidence="1">
    <location>
        <begin position="55"/>
        <end position="155"/>
    </location>
</feature>
<feature type="region of interest" description="PDF region">
    <location>
        <begin position="189"/>
        <end position="238"/>
    </location>
</feature>
<feature type="mutagenesis site" description="Reduced ssDNA-binding." evidence="2">
    <original>WWD</original>
    <variation>GWG</variation>
    <location>
        <begin position="199"/>
        <end position="201"/>
    </location>
</feature>
<feature type="mutagenesis site" description="Reduced ssDNA-binding." evidence="2">
    <original>DF</original>
    <variation>GG</variation>
    <location>
        <begin position="213"/>
        <end position="214"/>
    </location>
</feature>
<feature type="mutagenesis site" description="Reduced ssDNA-binding." evidence="2">
    <original>LW</original>
    <variation>RG</variation>
    <location>
        <begin position="223"/>
        <end position="224"/>
    </location>
</feature>
<proteinExistence type="evidence at protein level"/>
<dbReference type="EMBL" id="AC007519">
    <property type="protein sequence ID" value="AAD46017.1"/>
    <property type="molecule type" value="Genomic_DNA"/>
</dbReference>
<dbReference type="EMBL" id="AC012463">
    <property type="protein sequence ID" value="AAF99794.1"/>
    <property type="status" value="ALT_SEQ"/>
    <property type="molecule type" value="Genomic_DNA"/>
</dbReference>
<dbReference type="EMBL" id="CP002684">
    <property type="protein sequence ID" value="AEE32204.1"/>
    <property type="molecule type" value="Genomic_DNA"/>
</dbReference>
<dbReference type="EMBL" id="BT005269">
    <property type="protein sequence ID" value="AAO63333.1"/>
    <property type="molecule type" value="mRNA"/>
</dbReference>
<dbReference type="EMBL" id="AK119114">
    <property type="protein sequence ID" value="BAC43686.1"/>
    <property type="molecule type" value="mRNA"/>
</dbReference>
<dbReference type="RefSeq" id="NP_175203.2">
    <property type="nucleotide sequence ID" value="NM_103665.3"/>
</dbReference>
<dbReference type="SMR" id="Q9SX99"/>
<dbReference type="FunCoup" id="Q9SX99">
    <property type="interactions" value="292"/>
</dbReference>
<dbReference type="STRING" id="3702.Q9SX99"/>
<dbReference type="PaxDb" id="3702-AT1G47720.1"/>
<dbReference type="ProteomicsDB" id="248910"/>
<dbReference type="EnsemblPlants" id="AT1G47720.1">
    <property type="protein sequence ID" value="AT1G47720.1"/>
    <property type="gene ID" value="AT1G47720"/>
</dbReference>
<dbReference type="GeneID" id="841183"/>
<dbReference type="Gramene" id="AT1G47720.1">
    <property type="protein sequence ID" value="AT1G47720.1"/>
    <property type="gene ID" value="AT1G47720"/>
</dbReference>
<dbReference type="KEGG" id="ath:AT1G47720"/>
<dbReference type="Araport" id="AT1G47720"/>
<dbReference type="TAIR" id="AT1G47720">
    <property type="gene designation" value="OSB1"/>
</dbReference>
<dbReference type="eggNOG" id="ENOG502S048">
    <property type="taxonomic scope" value="Eukaryota"/>
</dbReference>
<dbReference type="HOGENOM" id="CLU_049248_0_0_1"/>
<dbReference type="InParanoid" id="Q9SX99"/>
<dbReference type="OMA" id="FKVMLKM"/>
<dbReference type="PhylomeDB" id="Q9SX99"/>
<dbReference type="PRO" id="PR:Q9SX99"/>
<dbReference type="Proteomes" id="UP000006548">
    <property type="component" value="Chromosome 1"/>
</dbReference>
<dbReference type="ExpressionAtlas" id="Q9SX99">
    <property type="expression patterns" value="baseline and differential"/>
</dbReference>
<dbReference type="GO" id="GO:0048046">
    <property type="term" value="C:apoplast"/>
    <property type="evidence" value="ECO:0007005"/>
    <property type="project" value="TAIR"/>
</dbReference>
<dbReference type="GO" id="GO:0005739">
    <property type="term" value="C:mitochondrion"/>
    <property type="evidence" value="ECO:0000314"/>
    <property type="project" value="TAIR"/>
</dbReference>
<dbReference type="GO" id="GO:0003697">
    <property type="term" value="F:single-stranded DNA binding"/>
    <property type="evidence" value="ECO:0000314"/>
    <property type="project" value="TAIR"/>
</dbReference>
<dbReference type="GO" id="GO:0006260">
    <property type="term" value="P:DNA replication"/>
    <property type="evidence" value="ECO:0007669"/>
    <property type="project" value="InterPro"/>
</dbReference>
<dbReference type="GO" id="GO:0000002">
    <property type="term" value="P:mitochondrial genome maintenance"/>
    <property type="evidence" value="ECO:0000315"/>
    <property type="project" value="TAIR"/>
</dbReference>
<dbReference type="GO" id="GO:0045910">
    <property type="term" value="P:negative regulation of DNA recombination"/>
    <property type="evidence" value="ECO:0000315"/>
    <property type="project" value="TAIR"/>
</dbReference>
<dbReference type="InterPro" id="IPR012340">
    <property type="entry name" value="NA-bd_OB-fold"/>
</dbReference>
<dbReference type="InterPro" id="IPR000424">
    <property type="entry name" value="Primosome_PriB/ssb"/>
</dbReference>
<dbReference type="InterPro" id="IPR011344">
    <property type="entry name" value="ssDNA-bd"/>
</dbReference>
<dbReference type="PANTHER" id="PTHR10302:SF18">
    <property type="entry name" value="PROTEIN OSB1, MITOCHONDRIAL"/>
    <property type="match status" value="1"/>
</dbReference>
<dbReference type="PANTHER" id="PTHR10302">
    <property type="entry name" value="SINGLE-STRANDED DNA-BINDING PROTEIN"/>
    <property type="match status" value="1"/>
</dbReference>
<dbReference type="SUPFAM" id="SSF50249">
    <property type="entry name" value="Nucleic acid-binding proteins"/>
    <property type="match status" value="1"/>
</dbReference>
<dbReference type="PROSITE" id="PS50935">
    <property type="entry name" value="SSB"/>
    <property type="match status" value="1"/>
</dbReference>
<accession>Q9SX99</accession>
<accession>Q9FZE9</accession>
<keyword id="KW-0238">DNA-binding</keyword>
<keyword id="KW-0496">Mitochondrion</keyword>
<keyword id="KW-1185">Reference proteome</keyword>
<keyword id="KW-0809">Transit peptide</keyword>
<reference key="1">
    <citation type="journal article" date="2000" name="Nature">
        <title>Sequence and analysis of chromosome 1 of the plant Arabidopsis thaliana.</title>
        <authorList>
            <person name="Theologis A."/>
            <person name="Ecker J.R."/>
            <person name="Palm C.J."/>
            <person name="Federspiel N.A."/>
            <person name="Kaul S."/>
            <person name="White O."/>
            <person name="Alonso J."/>
            <person name="Altafi H."/>
            <person name="Araujo R."/>
            <person name="Bowman C.L."/>
            <person name="Brooks S.Y."/>
            <person name="Buehler E."/>
            <person name="Chan A."/>
            <person name="Chao Q."/>
            <person name="Chen H."/>
            <person name="Cheuk R.F."/>
            <person name="Chin C.W."/>
            <person name="Chung M.K."/>
            <person name="Conn L."/>
            <person name="Conway A.B."/>
            <person name="Conway A.R."/>
            <person name="Creasy T.H."/>
            <person name="Dewar K."/>
            <person name="Dunn P."/>
            <person name="Etgu P."/>
            <person name="Feldblyum T.V."/>
            <person name="Feng J.-D."/>
            <person name="Fong B."/>
            <person name="Fujii C.Y."/>
            <person name="Gill J.E."/>
            <person name="Goldsmith A.D."/>
            <person name="Haas B."/>
            <person name="Hansen N.F."/>
            <person name="Hughes B."/>
            <person name="Huizar L."/>
            <person name="Hunter J.L."/>
            <person name="Jenkins J."/>
            <person name="Johnson-Hopson C."/>
            <person name="Khan S."/>
            <person name="Khaykin E."/>
            <person name="Kim C.J."/>
            <person name="Koo H.L."/>
            <person name="Kremenetskaia I."/>
            <person name="Kurtz D.B."/>
            <person name="Kwan A."/>
            <person name="Lam B."/>
            <person name="Langin-Hooper S."/>
            <person name="Lee A."/>
            <person name="Lee J.M."/>
            <person name="Lenz C.A."/>
            <person name="Li J.H."/>
            <person name="Li Y.-P."/>
            <person name="Lin X."/>
            <person name="Liu S.X."/>
            <person name="Liu Z.A."/>
            <person name="Luros J.S."/>
            <person name="Maiti R."/>
            <person name="Marziali A."/>
            <person name="Militscher J."/>
            <person name="Miranda M."/>
            <person name="Nguyen M."/>
            <person name="Nierman W.C."/>
            <person name="Osborne B.I."/>
            <person name="Pai G."/>
            <person name="Peterson J."/>
            <person name="Pham P.K."/>
            <person name="Rizzo M."/>
            <person name="Rooney T."/>
            <person name="Rowley D."/>
            <person name="Sakano H."/>
            <person name="Salzberg S.L."/>
            <person name="Schwartz J.R."/>
            <person name="Shinn P."/>
            <person name="Southwick A.M."/>
            <person name="Sun H."/>
            <person name="Tallon L.J."/>
            <person name="Tambunga G."/>
            <person name="Toriumi M.J."/>
            <person name="Town C.D."/>
            <person name="Utterback T."/>
            <person name="Van Aken S."/>
            <person name="Vaysberg M."/>
            <person name="Vysotskaia V.S."/>
            <person name="Walker M."/>
            <person name="Wu D."/>
            <person name="Yu G."/>
            <person name="Fraser C.M."/>
            <person name="Venter J.C."/>
            <person name="Davis R.W."/>
        </authorList>
    </citation>
    <scope>NUCLEOTIDE SEQUENCE [LARGE SCALE GENOMIC DNA]</scope>
    <source>
        <strain>cv. Columbia</strain>
    </source>
</reference>
<reference key="2">
    <citation type="journal article" date="2017" name="Plant J.">
        <title>Araport11: a complete reannotation of the Arabidopsis thaliana reference genome.</title>
        <authorList>
            <person name="Cheng C.Y."/>
            <person name="Krishnakumar V."/>
            <person name="Chan A.P."/>
            <person name="Thibaud-Nissen F."/>
            <person name="Schobel S."/>
            <person name="Town C.D."/>
        </authorList>
    </citation>
    <scope>GENOME REANNOTATION</scope>
    <source>
        <strain>cv. Columbia</strain>
    </source>
</reference>
<reference key="3">
    <citation type="journal article" date="2003" name="Science">
        <title>Empirical analysis of transcriptional activity in the Arabidopsis genome.</title>
        <authorList>
            <person name="Yamada K."/>
            <person name="Lim J."/>
            <person name="Dale J.M."/>
            <person name="Chen H."/>
            <person name="Shinn P."/>
            <person name="Palm C.J."/>
            <person name="Southwick A.M."/>
            <person name="Wu H.C."/>
            <person name="Kim C.J."/>
            <person name="Nguyen M."/>
            <person name="Pham P.K."/>
            <person name="Cheuk R.F."/>
            <person name="Karlin-Newmann G."/>
            <person name="Liu S.X."/>
            <person name="Lam B."/>
            <person name="Sakano H."/>
            <person name="Wu T."/>
            <person name="Yu G."/>
            <person name="Miranda M."/>
            <person name="Quach H.L."/>
            <person name="Tripp M."/>
            <person name="Chang C.H."/>
            <person name="Lee J.M."/>
            <person name="Toriumi M.J."/>
            <person name="Chan M.M."/>
            <person name="Tang C.C."/>
            <person name="Onodera C.S."/>
            <person name="Deng J.M."/>
            <person name="Akiyama K."/>
            <person name="Ansari Y."/>
            <person name="Arakawa T."/>
            <person name="Banh J."/>
            <person name="Banno F."/>
            <person name="Bowser L."/>
            <person name="Brooks S.Y."/>
            <person name="Carninci P."/>
            <person name="Chao Q."/>
            <person name="Choy N."/>
            <person name="Enju A."/>
            <person name="Goldsmith A.D."/>
            <person name="Gurjal M."/>
            <person name="Hansen N.F."/>
            <person name="Hayashizaki Y."/>
            <person name="Johnson-Hopson C."/>
            <person name="Hsuan V.W."/>
            <person name="Iida K."/>
            <person name="Karnes M."/>
            <person name="Khan S."/>
            <person name="Koesema E."/>
            <person name="Ishida J."/>
            <person name="Jiang P.X."/>
            <person name="Jones T."/>
            <person name="Kawai J."/>
            <person name="Kamiya A."/>
            <person name="Meyers C."/>
            <person name="Nakajima M."/>
            <person name="Narusaka M."/>
            <person name="Seki M."/>
            <person name="Sakurai T."/>
            <person name="Satou M."/>
            <person name="Tamse R."/>
            <person name="Vaysberg M."/>
            <person name="Wallender E.K."/>
            <person name="Wong C."/>
            <person name="Yamamura Y."/>
            <person name="Yuan S."/>
            <person name="Shinozaki K."/>
            <person name="Davis R.W."/>
            <person name="Theologis A."/>
            <person name="Ecker J.R."/>
        </authorList>
    </citation>
    <scope>NUCLEOTIDE SEQUENCE [LARGE SCALE MRNA]</scope>
    <source>
        <strain>cv. Columbia</strain>
    </source>
</reference>
<reference key="4">
    <citation type="journal article" date="2002" name="Science">
        <title>Functional annotation of a full-length Arabidopsis cDNA collection.</title>
        <authorList>
            <person name="Seki M."/>
            <person name="Narusaka M."/>
            <person name="Kamiya A."/>
            <person name="Ishida J."/>
            <person name="Satou M."/>
            <person name="Sakurai T."/>
            <person name="Nakajima M."/>
            <person name="Enju A."/>
            <person name="Akiyama K."/>
            <person name="Oono Y."/>
            <person name="Muramatsu M."/>
            <person name="Hayashizaki Y."/>
            <person name="Kawai J."/>
            <person name="Carninci P."/>
            <person name="Itoh M."/>
            <person name="Ishii Y."/>
            <person name="Arakawa T."/>
            <person name="Shibata K."/>
            <person name="Shinagawa A."/>
            <person name="Shinozaki K."/>
        </authorList>
    </citation>
    <scope>NUCLEOTIDE SEQUENCE [LARGE SCALE MRNA]</scope>
    <source>
        <strain>cv. Columbia</strain>
    </source>
</reference>
<reference key="5">
    <citation type="journal article" date="2006" name="Plant Cell">
        <title>The plant-specific ssDNA binding protein OSB1 is involved in the stoichiometric transmission of mitochondrial DNA in Arabidopsis.</title>
        <authorList>
            <person name="Zaegel V."/>
            <person name="Guermann B."/>
            <person name="Le Ret M."/>
            <person name="Andres C."/>
            <person name="Meyer D."/>
            <person name="Erhardt M."/>
            <person name="Canaday J."/>
            <person name="Gualberto J.M."/>
            <person name="Imbault P."/>
        </authorList>
    </citation>
    <scope>FUNCTION</scope>
    <scope>MUTAGENESIS OF 199-TRP--ASP-201; 213-ASP-PHE-214 AND 223-LEU-TRP-224</scope>
    <scope>DNA-BINDING</scope>
    <scope>SUBCELLULAR LOCATION</scope>
    <scope>TISSUE SPECIFICITY</scope>
    <scope>DISRUPTION PHENOTYPE</scope>
</reference>
<reference key="6">
    <citation type="journal article" date="2015" name="J. Exp. Bot.">
        <title>Identification of cleavage sites and substrate proteins for two mitochondrial intermediate peptidases in Arabidopsis thaliana.</title>
        <authorList>
            <person name="Carrie C."/>
            <person name="Venne A.S."/>
            <person name="Zahedi R.P."/>
            <person name="Soll J."/>
        </authorList>
    </citation>
    <scope>IDENTIFICATION BY MASS SPECTROMETRY</scope>
    <scope>CLEAVAGE OF TRANSIT PEPTIDE AFTER PHE-28</scope>
</reference>
<protein>
    <recommendedName>
        <fullName>Protein OSB1, mitochondrial</fullName>
    </recommendedName>
    <alternativeName>
        <fullName>Organellar single-stranded DNA-binding protein 1</fullName>
    </alternativeName>
</protein>